<evidence type="ECO:0000255" key="1">
    <source>
        <dbReference type="HAMAP-Rule" id="MF_02122"/>
    </source>
</evidence>
<sequence length="393" mass="42865">MIQTKDDFFALVNEIQSSAYYKEPLAFGIARVDRGQKNPEKILQATFPFINWKENYGSAAIFQKALHETGKLLNDESEAVYDVTKNFVAEALSYCNPWIEEAIGDAHKNVQVIKYLSTLDEEELANFKIVFLFEDAAPKSVEAVYLKLYALSTGKAALRSVNLNGAFGILHNVAWSGTTPIELDWLRENELELKMSGQYPVIDSVDKFPRFLQHIIPADNTRILDAAKVRMGAQLAAGTTVMPGASYINFNAGTLGPVMVEGRISSSAVVGKGSDVGGGASILGVLSGTSGNPISIGENCLLGANSVTGIPLGNGCIVDAGIAVLEGTKFFMSEADYEKIKEANPEWNAEYKEFFKGRELAGLSGLHFRQDSTSGQMKVFRSNKEVKLNEELH</sequence>
<feature type="chain" id="PRO_0000412263" description="2,3,4,5-tetrahydropyridine-2,6-dicarboxylate N-succinyltransferase">
    <location>
        <begin position="1"/>
        <end position="393"/>
    </location>
</feature>
<feature type="active site" description="Acyl-anhydride intermediate" evidence="1">
    <location>
        <position position="261"/>
    </location>
</feature>
<feature type="binding site" evidence="1">
    <location>
        <position position="263"/>
    </location>
    <ligand>
        <name>succinyl-CoA</name>
        <dbReference type="ChEBI" id="CHEBI:57292"/>
    </ligand>
</feature>
<feature type="binding site" evidence="1">
    <location>
        <position position="278"/>
    </location>
    <ligand>
        <name>succinyl-CoA</name>
        <dbReference type="ChEBI" id="CHEBI:57292"/>
    </ligand>
</feature>
<feature type="binding site" evidence="1">
    <location>
        <position position="281"/>
    </location>
    <ligand>
        <name>succinyl-CoA</name>
        <dbReference type="ChEBI" id="CHEBI:57292"/>
    </ligand>
</feature>
<feature type="binding site" evidence="1">
    <location>
        <position position="304"/>
    </location>
    <ligand>
        <name>succinyl-CoA</name>
        <dbReference type="ChEBI" id="CHEBI:57292"/>
    </ligand>
</feature>
<feature type="binding site" evidence="1">
    <location>
        <begin position="319"/>
        <end position="320"/>
    </location>
    <ligand>
        <name>succinyl-CoA</name>
        <dbReference type="ChEBI" id="CHEBI:57292"/>
    </ligand>
</feature>
<feature type="binding site" evidence="1">
    <location>
        <position position="327"/>
    </location>
    <ligand>
        <name>succinyl-CoA</name>
        <dbReference type="ChEBI" id="CHEBI:57292"/>
    </ligand>
</feature>
<feature type="binding site" evidence="1">
    <location>
        <position position="356"/>
    </location>
    <ligand>
        <name>succinyl-CoA</name>
        <dbReference type="ChEBI" id="CHEBI:57292"/>
    </ligand>
</feature>
<feature type="binding site" evidence="1">
    <location>
        <begin position="369"/>
        <end position="372"/>
    </location>
    <ligand>
        <name>succinyl-CoA</name>
        <dbReference type="ChEBI" id="CHEBI:57292"/>
    </ligand>
</feature>
<reference key="1">
    <citation type="journal article" date="2007" name="Proc. Natl. Acad. Sci. U.S.A.">
        <title>Deep-sea vent epsilon-proteobacterial genomes provide insights into emergence of pathogens.</title>
        <authorList>
            <person name="Nakagawa S."/>
            <person name="Takaki Y."/>
            <person name="Shimamura S."/>
            <person name="Reysenbach A.-L."/>
            <person name="Takai K."/>
            <person name="Horikoshi K."/>
        </authorList>
    </citation>
    <scope>NUCLEOTIDE SEQUENCE [LARGE SCALE GENOMIC DNA]</scope>
    <source>
        <strain>SB155-2</strain>
    </source>
</reference>
<keyword id="KW-0012">Acyltransferase</keyword>
<keyword id="KW-0028">Amino-acid biosynthesis</keyword>
<keyword id="KW-0963">Cytoplasm</keyword>
<keyword id="KW-0220">Diaminopimelate biosynthesis</keyword>
<keyword id="KW-0457">Lysine biosynthesis</keyword>
<keyword id="KW-1185">Reference proteome</keyword>
<keyword id="KW-0808">Transferase</keyword>
<name>DAPD_NITSB</name>
<comment type="function">
    <text evidence="1">Catalyzes the conversion of the cyclic tetrahydrodipicolinate (THDP) into the acyclic N-succinyl-L-2-amino-6-oxopimelate using succinyl-CoA.</text>
</comment>
<comment type="catalytic activity">
    <reaction evidence="1">
        <text>(S)-2,3,4,5-tetrahydrodipicolinate + succinyl-CoA + H2O = (S)-2-succinylamino-6-oxoheptanedioate + CoA</text>
        <dbReference type="Rhea" id="RHEA:17325"/>
        <dbReference type="ChEBI" id="CHEBI:15377"/>
        <dbReference type="ChEBI" id="CHEBI:15685"/>
        <dbReference type="ChEBI" id="CHEBI:16845"/>
        <dbReference type="ChEBI" id="CHEBI:57287"/>
        <dbReference type="ChEBI" id="CHEBI:57292"/>
        <dbReference type="EC" id="2.3.1.117"/>
    </reaction>
</comment>
<comment type="pathway">
    <text evidence="1">Amino-acid biosynthesis; L-lysine biosynthesis via DAP pathway; LL-2,6-diaminopimelate from (S)-tetrahydrodipicolinate (succinylase route): step 1/3.</text>
</comment>
<comment type="subunit">
    <text evidence="1">Homotrimer.</text>
</comment>
<comment type="subcellular location">
    <subcellularLocation>
        <location evidence="1">Cytoplasm</location>
    </subcellularLocation>
</comment>
<comment type="similarity">
    <text evidence="1">Belongs to the type 2 tetrahydrodipicolinate N-succinyltransferase family.</text>
</comment>
<protein>
    <recommendedName>
        <fullName evidence="1">2,3,4,5-tetrahydropyridine-2,6-dicarboxylate N-succinyltransferase</fullName>
        <ecNumber evidence="1">2.3.1.117</ecNumber>
    </recommendedName>
    <alternativeName>
        <fullName evidence="1">Tetrahydrodipicolinate N-succinyltransferase</fullName>
        <shortName evidence="1">THDP succinyltransferase</shortName>
        <shortName evidence="1">THP succinyltransferase</shortName>
    </alternativeName>
    <alternativeName>
        <fullName evidence="1">Tetrahydropicolinate succinylase</fullName>
    </alternativeName>
</protein>
<accession>A6Q5J0</accession>
<organism>
    <name type="scientific">Nitratiruptor sp. (strain SB155-2)</name>
    <dbReference type="NCBI Taxonomy" id="387092"/>
    <lineage>
        <taxon>Bacteria</taxon>
        <taxon>Pseudomonadati</taxon>
        <taxon>Campylobacterota</taxon>
        <taxon>Epsilonproteobacteria</taxon>
        <taxon>Nautiliales</taxon>
        <taxon>Nitratiruptoraceae</taxon>
        <taxon>Nitratiruptor</taxon>
    </lineage>
</organism>
<gene>
    <name evidence="1" type="primary">dapD</name>
    <name type="ordered locus">NIS_1643</name>
</gene>
<dbReference type="EC" id="2.3.1.117" evidence="1"/>
<dbReference type="EMBL" id="AP009178">
    <property type="protein sequence ID" value="BAF70749.1"/>
    <property type="molecule type" value="Genomic_DNA"/>
</dbReference>
<dbReference type="RefSeq" id="WP_012083012.1">
    <property type="nucleotide sequence ID" value="NC_009662.1"/>
</dbReference>
<dbReference type="SMR" id="A6Q5J0"/>
<dbReference type="STRING" id="387092.NIS_1643"/>
<dbReference type="KEGG" id="nis:NIS_1643"/>
<dbReference type="eggNOG" id="COG2171">
    <property type="taxonomic scope" value="Bacteria"/>
</dbReference>
<dbReference type="HOGENOM" id="CLU_057490_1_0_7"/>
<dbReference type="InParanoid" id="A6Q5J0"/>
<dbReference type="OrthoDB" id="9782799at2"/>
<dbReference type="UniPathway" id="UPA00034">
    <property type="reaction ID" value="UER00019"/>
</dbReference>
<dbReference type="Proteomes" id="UP000001118">
    <property type="component" value="Chromosome"/>
</dbReference>
<dbReference type="GO" id="GO:0005737">
    <property type="term" value="C:cytoplasm"/>
    <property type="evidence" value="ECO:0007669"/>
    <property type="project" value="UniProtKB-SubCell"/>
</dbReference>
<dbReference type="GO" id="GO:0008666">
    <property type="term" value="F:2,3,4,5-tetrahydropyridine-2,6-dicarboxylate N-succinyltransferase activity"/>
    <property type="evidence" value="ECO:0007669"/>
    <property type="project" value="UniProtKB-EC"/>
</dbReference>
<dbReference type="GO" id="GO:0019877">
    <property type="term" value="P:diaminopimelate biosynthetic process"/>
    <property type="evidence" value="ECO:0007669"/>
    <property type="project" value="UniProtKB-KW"/>
</dbReference>
<dbReference type="GO" id="GO:0009089">
    <property type="term" value="P:lysine biosynthetic process via diaminopimelate"/>
    <property type="evidence" value="ECO:0007669"/>
    <property type="project" value="UniProtKB-UniPathway"/>
</dbReference>
<dbReference type="CDD" id="cd04649">
    <property type="entry name" value="LbH_THP_succinylT_putative"/>
    <property type="match status" value="1"/>
</dbReference>
<dbReference type="Gene3D" id="3.30.70.2010">
    <property type="match status" value="1"/>
</dbReference>
<dbReference type="Gene3D" id="2.160.10.10">
    <property type="entry name" value="Hexapeptide repeat proteins"/>
    <property type="match status" value="1"/>
</dbReference>
<dbReference type="Gene3D" id="3.30.60.70">
    <property type="entry name" value="Trimeric LpxA-like enzymes"/>
    <property type="match status" value="1"/>
</dbReference>
<dbReference type="HAMAP" id="MF_02122">
    <property type="entry name" value="DapD_type2"/>
    <property type="match status" value="1"/>
</dbReference>
<dbReference type="InterPro" id="IPR001451">
    <property type="entry name" value="Hexapep"/>
</dbReference>
<dbReference type="InterPro" id="IPR032784">
    <property type="entry name" value="THDPS_M"/>
</dbReference>
<dbReference type="InterPro" id="IPR038361">
    <property type="entry name" value="THDPS_M_sf"/>
</dbReference>
<dbReference type="InterPro" id="IPR011004">
    <property type="entry name" value="Trimer_LpxA-like_sf"/>
</dbReference>
<dbReference type="InterPro" id="IPR026586">
    <property type="entry name" value="Type2_DapD"/>
</dbReference>
<dbReference type="Pfam" id="PF14602">
    <property type="entry name" value="Hexapep_2"/>
    <property type="match status" value="1"/>
</dbReference>
<dbReference type="Pfam" id="PF14789">
    <property type="entry name" value="THDPS_M"/>
    <property type="match status" value="1"/>
</dbReference>
<dbReference type="Pfam" id="PF14790">
    <property type="entry name" value="THDPS_N"/>
    <property type="match status" value="1"/>
</dbReference>
<dbReference type="SUPFAM" id="SSF51161">
    <property type="entry name" value="Trimeric LpxA-like enzymes"/>
    <property type="match status" value="1"/>
</dbReference>
<proteinExistence type="inferred from homology"/>